<keyword id="KW-0244">Early protein</keyword>
<keyword id="KW-0378">Hydrolase</keyword>
<keyword id="KW-0460">Magnesium</keyword>
<keyword id="KW-0479">Metal-binding</keyword>
<keyword id="KW-0546">Nucleotide metabolism</keyword>
<dbReference type="EC" id="3.6.1.23"/>
<dbReference type="EMBL" id="AF438165">
    <property type="protein sequence ID" value="AAL73744.1"/>
    <property type="molecule type" value="Genomic_DNA"/>
</dbReference>
<dbReference type="RefSeq" id="NP_570427.1">
    <property type="nucleotide sequence ID" value="NC_003391.1"/>
</dbReference>
<dbReference type="SMR" id="Q8V2Y0"/>
<dbReference type="KEGG" id="vg:932508"/>
<dbReference type="Proteomes" id="UP000152221">
    <property type="component" value="Genome"/>
</dbReference>
<dbReference type="GO" id="GO:0004170">
    <property type="term" value="F:dUTP diphosphatase activity"/>
    <property type="evidence" value="ECO:0007669"/>
    <property type="project" value="UniProtKB-EC"/>
</dbReference>
<dbReference type="GO" id="GO:0000287">
    <property type="term" value="F:magnesium ion binding"/>
    <property type="evidence" value="ECO:0007669"/>
    <property type="project" value="InterPro"/>
</dbReference>
<dbReference type="GO" id="GO:0006226">
    <property type="term" value="P:dUMP biosynthetic process"/>
    <property type="evidence" value="ECO:0007669"/>
    <property type="project" value="InterPro"/>
</dbReference>
<dbReference type="GO" id="GO:0046081">
    <property type="term" value="P:dUTP catabolic process"/>
    <property type="evidence" value="ECO:0007669"/>
    <property type="project" value="InterPro"/>
</dbReference>
<dbReference type="CDD" id="cd07557">
    <property type="entry name" value="trimeric_dUTPase"/>
    <property type="match status" value="1"/>
</dbReference>
<dbReference type="Gene3D" id="2.70.40.10">
    <property type="match status" value="1"/>
</dbReference>
<dbReference type="InterPro" id="IPR008181">
    <property type="entry name" value="dUTPase"/>
</dbReference>
<dbReference type="InterPro" id="IPR029054">
    <property type="entry name" value="dUTPase-like"/>
</dbReference>
<dbReference type="InterPro" id="IPR036157">
    <property type="entry name" value="dUTPase-like_sf"/>
</dbReference>
<dbReference type="InterPro" id="IPR033704">
    <property type="entry name" value="dUTPase_trimeric"/>
</dbReference>
<dbReference type="NCBIfam" id="TIGR00576">
    <property type="entry name" value="dut"/>
    <property type="match status" value="1"/>
</dbReference>
<dbReference type="NCBIfam" id="NF001862">
    <property type="entry name" value="PRK00601.1"/>
    <property type="match status" value="1"/>
</dbReference>
<dbReference type="PANTHER" id="PTHR11241">
    <property type="entry name" value="DEOXYURIDINE 5'-TRIPHOSPHATE NUCLEOTIDOHYDROLASE"/>
    <property type="match status" value="1"/>
</dbReference>
<dbReference type="PANTHER" id="PTHR11241:SF0">
    <property type="entry name" value="DEOXYURIDINE 5'-TRIPHOSPHATE NUCLEOTIDOHYDROLASE"/>
    <property type="match status" value="1"/>
</dbReference>
<dbReference type="Pfam" id="PF00692">
    <property type="entry name" value="dUTPase"/>
    <property type="match status" value="1"/>
</dbReference>
<dbReference type="SUPFAM" id="SSF51283">
    <property type="entry name" value="dUTPase-like"/>
    <property type="match status" value="1"/>
</dbReference>
<organismHost>
    <name type="scientific">Camelus</name>
    <dbReference type="NCBI Taxonomy" id="9836"/>
</organismHost>
<accession>Q8V2Y0</accession>
<feature type="chain" id="PRO_0000182944" description="Deoxyuridine 5'-triphosphate nucleotidohydrolase">
    <location>
        <begin position="1"/>
        <end position="147"/>
    </location>
</feature>
<feature type="binding site" evidence="2">
    <location>
        <position position="24"/>
    </location>
    <ligand>
        <name>Mg(2+)</name>
        <dbReference type="ChEBI" id="CHEBI:18420"/>
    </ligand>
</feature>
<feature type="binding site" evidence="2">
    <location>
        <begin position="68"/>
        <end position="70"/>
    </location>
    <ligand>
        <name>dUTP</name>
        <dbReference type="ChEBI" id="CHEBI:61555"/>
    </ligand>
</feature>
<feature type="binding site" evidence="2">
    <location>
        <begin position="82"/>
        <end position="85"/>
    </location>
    <ligand>
        <name>dUTP</name>
        <dbReference type="ChEBI" id="CHEBI:61555"/>
    </ligand>
</feature>
<feature type="binding site" evidence="2">
    <location>
        <position position="88"/>
    </location>
    <ligand>
        <name>dUTP</name>
        <dbReference type="ChEBI" id="CHEBI:61555"/>
    </ligand>
</feature>
<feature type="binding site" evidence="2">
    <location>
        <position position="93"/>
    </location>
    <ligand>
        <name>dUTP</name>
        <dbReference type="ChEBI" id="CHEBI:61555"/>
    </ligand>
</feature>
<feature type="binding site" evidence="2">
    <location>
        <position position="95"/>
    </location>
    <ligand>
        <name>dUTP</name>
        <dbReference type="ChEBI" id="CHEBI:61555"/>
    </ligand>
</feature>
<feature type="binding site" evidence="2">
    <location>
        <position position="111"/>
    </location>
    <ligand>
        <name>dUTP</name>
        <dbReference type="ChEBI" id="CHEBI:61555"/>
    </ligand>
</feature>
<gene>
    <name type="primary">OPG046</name>
    <name type="synonym">DUT</name>
    <name type="ordered locus">CMLV037</name>
</gene>
<protein>
    <recommendedName>
        <fullName>Deoxyuridine 5'-triphosphate nucleotidohydrolase</fullName>
        <shortName>dUTPase</shortName>
        <ecNumber>3.6.1.23</ecNumber>
    </recommendedName>
    <alternativeName>
        <fullName>dUTP pyrophosphatase</fullName>
    </alternativeName>
</protein>
<proteinExistence type="inferred from homology"/>
<sequence>MFNMNINSPVRFVKETNRAKSPTRQSPYAAGYDLYSAYYYTIPPGERQLIKTDISMSMPKFCYGRIAPRSGLSLKGIDIGGGVIDEDYRGNIGVILINNGKCTFNVNTGDRIAQLIYQRIYYPELKEVQSLDSTDRGDQGFGSTGLR</sequence>
<reference key="1">
    <citation type="journal article" date="2002" name="Virology">
        <title>The genome of camelpox virus.</title>
        <authorList>
            <person name="Afonso C.L."/>
            <person name="Tulman E.R."/>
            <person name="Lu Z."/>
            <person name="Zsak L."/>
            <person name="Sandybaev N.T."/>
            <person name="Kerembekova U.Z."/>
            <person name="Zaitsev V.L."/>
            <person name="Kutish G.F."/>
            <person name="Rock D.L."/>
        </authorList>
    </citation>
    <scope>NUCLEOTIDE SEQUENCE [LARGE SCALE GENOMIC DNA]</scope>
</reference>
<evidence type="ECO:0000250" key="1"/>
<evidence type="ECO:0000250" key="2">
    <source>
        <dbReference type="UniProtKB" id="P17374"/>
    </source>
</evidence>
<evidence type="ECO:0000305" key="3"/>
<organism>
    <name type="scientific">Camelpox virus (strain M-96)</name>
    <dbReference type="NCBI Taxonomy" id="203173"/>
    <lineage>
        <taxon>Viruses</taxon>
        <taxon>Varidnaviria</taxon>
        <taxon>Bamfordvirae</taxon>
        <taxon>Nucleocytoviricota</taxon>
        <taxon>Pokkesviricetes</taxon>
        <taxon>Chitovirales</taxon>
        <taxon>Poxviridae</taxon>
        <taxon>Chordopoxvirinae</taxon>
        <taxon>Orthopoxvirus</taxon>
        <taxon>Camelpox virus</taxon>
    </lineage>
</organism>
<comment type="function">
    <text evidence="2">This enzyme is involved in nucleotide metabolism: it produces dUMP, the immediate precursor of thymidine nucleotides and it decreases the intracellular concentration of dUTP so that uracil cannot be incorporated into DNA.</text>
</comment>
<comment type="catalytic activity">
    <reaction evidence="2">
        <text>dUTP + H2O = dUMP + diphosphate + H(+)</text>
        <dbReference type="Rhea" id="RHEA:10248"/>
        <dbReference type="ChEBI" id="CHEBI:15377"/>
        <dbReference type="ChEBI" id="CHEBI:15378"/>
        <dbReference type="ChEBI" id="CHEBI:33019"/>
        <dbReference type="ChEBI" id="CHEBI:61555"/>
        <dbReference type="ChEBI" id="CHEBI:246422"/>
        <dbReference type="EC" id="3.6.1.23"/>
    </reaction>
    <physiologicalReaction direction="left-to-right" evidence="2">
        <dbReference type="Rhea" id="RHEA:10249"/>
    </physiologicalReaction>
</comment>
<comment type="cofactor">
    <cofactor evidence="1">
        <name>Mg(2+)</name>
        <dbReference type="ChEBI" id="CHEBI:18420"/>
    </cofactor>
</comment>
<comment type="induction">
    <text evidence="2">Expressed in the early phase of the viral replicative cycle.</text>
</comment>
<comment type="similarity">
    <text evidence="3">Belongs to the dUTPase family.</text>
</comment>
<name>DUT_CAMPM</name>